<accession>A5ELM0</accession>
<organism>
    <name type="scientific">Bradyrhizobium sp. (strain BTAi1 / ATCC BAA-1182)</name>
    <dbReference type="NCBI Taxonomy" id="288000"/>
    <lineage>
        <taxon>Bacteria</taxon>
        <taxon>Pseudomonadati</taxon>
        <taxon>Pseudomonadota</taxon>
        <taxon>Alphaproteobacteria</taxon>
        <taxon>Hyphomicrobiales</taxon>
        <taxon>Nitrobacteraceae</taxon>
        <taxon>Bradyrhizobium</taxon>
    </lineage>
</organism>
<evidence type="ECO:0000255" key="1">
    <source>
        <dbReference type="HAMAP-Rule" id="MF_01342"/>
    </source>
</evidence>
<evidence type="ECO:0000305" key="2"/>
<name>RL16_BRASB</name>
<reference key="1">
    <citation type="journal article" date="2007" name="Science">
        <title>Legumes symbioses: absence of nod genes in photosynthetic bradyrhizobia.</title>
        <authorList>
            <person name="Giraud E."/>
            <person name="Moulin L."/>
            <person name="Vallenet D."/>
            <person name="Barbe V."/>
            <person name="Cytryn E."/>
            <person name="Avarre J.-C."/>
            <person name="Jaubert M."/>
            <person name="Simon D."/>
            <person name="Cartieaux F."/>
            <person name="Prin Y."/>
            <person name="Bena G."/>
            <person name="Hannibal L."/>
            <person name="Fardoux J."/>
            <person name="Kojadinovic M."/>
            <person name="Vuillet L."/>
            <person name="Lajus A."/>
            <person name="Cruveiller S."/>
            <person name="Rouy Z."/>
            <person name="Mangenot S."/>
            <person name="Segurens B."/>
            <person name="Dossat C."/>
            <person name="Franck W.L."/>
            <person name="Chang W.-S."/>
            <person name="Saunders E."/>
            <person name="Bruce D."/>
            <person name="Richardson P."/>
            <person name="Normand P."/>
            <person name="Dreyfus B."/>
            <person name="Pignol D."/>
            <person name="Stacey G."/>
            <person name="Emerich D."/>
            <person name="Vermeglio A."/>
            <person name="Medigue C."/>
            <person name="Sadowsky M."/>
        </authorList>
    </citation>
    <scope>NUCLEOTIDE SEQUENCE [LARGE SCALE GENOMIC DNA]</scope>
    <source>
        <strain>BTAi1 / ATCC BAA-1182</strain>
    </source>
</reference>
<protein>
    <recommendedName>
        <fullName evidence="1">Large ribosomal subunit protein uL16</fullName>
    </recommendedName>
    <alternativeName>
        <fullName evidence="2">50S ribosomal protein L16</fullName>
    </alternativeName>
</protein>
<feature type="chain" id="PRO_1000054583" description="Large ribosomal subunit protein uL16">
    <location>
        <begin position="1"/>
        <end position="137"/>
    </location>
</feature>
<gene>
    <name evidence="1" type="primary">rplP</name>
    <name type="ordered locus">BBta_5063</name>
</gene>
<sequence length="137" mass="15255">MMQPKKTKFRKAHKGRIHGVASSGATLAFGQFGLKAMEPDRVTARQIEAARRALTRHMKRAGRVWIRVFPDLPVSKKPAEVRMGSGKGSPELWVARVKPGRVMFEIDGVSNQIAREALLLAAAKLPIKTRFVERIAE</sequence>
<proteinExistence type="inferred from homology"/>
<dbReference type="EMBL" id="CP000494">
    <property type="protein sequence ID" value="ABQ37064.1"/>
    <property type="molecule type" value="Genomic_DNA"/>
</dbReference>
<dbReference type="RefSeq" id="WP_008963467.1">
    <property type="nucleotide sequence ID" value="NC_009485.1"/>
</dbReference>
<dbReference type="SMR" id="A5ELM0"/>
<dbReference type="STRING" id="288000.BBta_5063"/>
<dbReference type="KEGG" id="bbt:BBta_5063"/>
<dbReference type="eggNOG" id="COG0197">
    <property type="taxonomic scope" value="Bacteria"/>
</dbReference>
<dbReference type="HOGENOM" id="CLU_078858_2_1_5"/>
<dbReference type="OrthoDB" id="9802589at2"/>
<dbReference type="Proteomes" id="UP000000246">
    <property type="component" value="Chromosome"/>
</dbReference>
<dbReference type="GO" id="GO:0022625">
    <property type="term" value="C:cytosolic large ribosomal subunit"/>
    <property type="evidence" value="ECO:0007669"/>
    <property type="project" value="TreeGrafter"/>
</dbReference>
<dbReference type="GO" id="GO:0019843">
    <property type="term" value="F:rRNA binding"/>
    <property type="evidence" value="ECO:0007669"/>
    <property type="project" value="UniProtKB-UniRule"/>
</dbReference>
<dbReference type="GO" id="GO:0003735">
    <property type="term" value="F:structural constituent of ribosome"/>
    <property type="evidence" value="ECO:0007669"/>
    <property type="project" value="InterPro"/>
</dbReference>
<dbReference type="GO" id="GO:0000049">
    <property type="term" value="F:tRNA binding"/>
    <property type="evidence" value="ECO:0007669"/>
    <property type="project" value="UniProtKB-KW"/>
</dbReference>
<dbReference type="GO" id="GO:0006412">
    <property type="term" value="P:translation"/>
    <property type="evidence" value="ECO:0007669"/>
    <property type="project" value="UniProtKB-UniRule"/>
</dbReference>
<dbReference type="CDD" id="cd01433">
    <property type="entry name" value="Ribosomal_L16_L10e"/>
    <property type="match status" value="1"/>
</dbReference>
<dbReference type="FunFam" id="3.90.1170.10:FF:000001">
    <property type="entry name" value="50S ribosomal protein L16"/>
    <property type="match status" value="1"/>
</dbReference>
<dbReference type="Gene3D" id="3.90.1170.10">
    <property type="entry name" value="Ribosomal protein L10e/L16"/>
    <property type="match status" value="1"/>
</dbReference>
<dbReference type="HAMAP" id="MF_01342">
    <property type="entry name" value="Ribosomal_uL16"/>
    <property type="match status" value="1"/>
</dbReference>
<dbReference type="InterPro" id="IPR047873">
    <property type="entry name" value="Ribosomal_uL16"/>
</dbReference>
<dbReference type="InterPro" id="IPR000114">
    <property type="entry name" value="Ribosomal_uL16_bact-type"/>
</dbReference>
<dbReference type="InterPro" id="IPR020798">
    <property type="entry name" value="Ribosomal_uL16_CS"/>
</dbReference>
<dbReference type="InterPro" id="IPR016180">
    <property type="entry name" value="Ribosomal_uL16_dom"/>
</dbReference>
<dbReference type="InterPro" id="IPR036920">
    <property type="entry name" value="Ribosomal_uL16_sf"/>
</dbReference>
<dbReference type="NCBIfam" id="TIGR01164">
    <property type="entry name" value="rplP_bact"/>
    <property type="match status" value="1"/>
</dbReference>
<dbReference type="PANTHER" id="PTHR12220">
    <property type="entry name" value="50S/60S RIBOSOMAL PROTEIN L16"/>
    <property type="match status" value="1"/>
</dbReference>
<dbReference type="PANTHER" id="PTHR12220:SF13">
    <property type="entry name" value="LARGE RIBOSOMAL SUBUNIT PROTEIN UL16M"/>
    <property type="match status" value="1"/>
</dbReference>
<dbReference type="Pfam" id="PF00252">
    <property type="entry name" value="Ribosomal_L16"/>
    <property type="match status" value="1"/>
</dbReference>
<dbReference type="PRINTS" id="PR00060">
    <property type="entry name" value="RIBOSOMALL16"/>
</dbReference>
<dbReference type="SUPFAM" id="SSF54686">
    <property type="entry name" value="Ribosomal protein L16p/L10e"/>
    <property type="match status" value="1"/>
</dbReference>
<dbReference type="PROSITE" id="PS00586">
    <property type="entry name" value="RIBOSOMAL_L16_1"/>
    <property type="match status" value="1"/>
</dbReference>
<dbReference type="PROSITE" id="PS00701">
    <property type="entry name" value="RIBOSOMAL_L16_2"/>
    <property type="match status" value="1"/>
</dbReference>
<keyword id="KW-1185">Reference proteome</keyword>
<keyword id="KW-0687">Ribonucleoprotein</keyword>
<keyword id="KW-0689">Ribosomal protein</keyword>
<keyword id="KW-0694">RNA-binding</keyword>
<keyword id="KW-0699">rRNA-binding</keyword>
<keyword id="KW-0820">tRNA-binding</keyword>
<comment type="function">
    <text evidence="1">Binds 23S rRNA and is also seen to make contacts with the A and possibly P site tRNAs.</text>
</comment>
<comment type="subunit">
    <text evidence="1">Part of the 50S ribosomal subunit.</text>
</comment>
<comment type="similarity">
    <text evidence="1">Belongs to the universal ribosomal protein uL16 family.</text>
</comment>